<accession>A8MLF5</accession>
<evidence type="ECO:0000255" key="1">
    <source>
        <dbReference type="HAMAP-Rule" id="MF_01365"/>
    </source>
</evidence>
<evidence type="ECO:0000305" key="2"/>
<protein>
    <recommendedName>
        <fullName evidence="1">Large ribosomal subunit protein uL6</fullName>
    </recommendedName>
    <alternativeName>
        <fullName evidence="2">50S ribosomal protein L6</fullName>
    </alternativeName>
</protein>
<gene>
    <name evidence="1" type="primary">rplF</name>
    <name type="ordered locus">Clos_0507</name>
</gene>
<proteinExistence type="inferred from homology"/>
<sequence length="179" mass="19972">MSRIGLRPIEIPQGVEVKIDEKNFAVVKGPKGTLEQQLSKDMEIKIEENVINVVRPTDNKKHKSLHGLTRTLLSNMVEGVTKGYEKKLELVGVGYRANKQGDKLVLTLGFSHPIEMVDPEGITVEVPSQTEIFVKGINKQVVGNYAAKIRELRKPEPYKGKGVKYANEVIRRKVGKTGK</sequence>
<reference key="1">
    <citation type="submission" date="2007-10" db="EMBL/GenBank/DDBJ databases">
        <title>Complete genome of Alkaliphilus oremlandii OhILAs.</title>
        <authorList>
            <person name="Copeland A."/>
            <person name="Lucas S."/>
            <person name="Lapidus A."/>
            <person name="Barry K."/>
            <person name="Detter J.C."/>
            <person name="Glavina del Rio T."/>
            <person name="Hammon N."/>
            <person name="Israni S."/>
            <person name="Dalin E."/>
            <person name="Tice H."/>
            <person name="Pitluck S."/>
            <person name="Chain P."/>
            <person name="Malfatti S."/>
            <person name="Shin M."/>
            <person name="Vergez L."/>
            <person name="Schmutz J."/>
            <person name="Larimer F."/>
            <person name="Land M."/>
            <person name="Hauser L."/>
            <person name="Kyrpides N."/>
            <person name="Mikhailova N."/>
            <person name="Stolz J.F."/>
            <person name="Dawson A."/>
            <person name="Fisher E."/>
            <person name="Crable B."/>
            <person name="Perera E."/>
            <person name="Lisak J."/>
            <person name="Ranganathan M."/>
            <person name="Basu P."/>
            <person name="Richardson P."/>
        </authorList>
    </citation>
    <scope>NUCLEOTIDE SEQUENCE [LARGE SCALE GENOMIC DNA]</scope>
    <source>
        <strain>OhILAs</strain>
    </source>
</reference>
<name>RL6_ALKOO</name>
<feature type="chain" id="PRO_1000067975" description="Large ribosomal subunit protein uL6">
    <location>
        <begin position="1"/>
        <end position="179"/>
    </location>
</feature>
<keyword id="KW-1185">Reference proteome</keyword>
<keyword id="KW-0687">Ribonucleoprotein</keyword>
<keyword id="KW-0689">Ribosomal protein</keyword>
<keyword id="KW-0694">RNA-binding</keyword>
<keyword id="KW-0699">rRNA-binding</keyword>
<comment type="function">
    <text evidence="1">This protein binds to the 23S rRNA, and is important in its secondary structure. It is located near the subunit interface in the base of the L7/L12 stalk, and near the tRNA binding site of the peptidyltransferase center.</text>
</comment>
<comment type="subunit">
    <text evidence="1">Part of the 50S ribosomal subunit.</text>
</comment>
<comment type="similarity">
    <text evidence="1">Belongs to the universal ribosomal protein uL6 family.</text>
</comment>
<organism>
    <name type="scientific">Alkaliphilus oremlandii (strain OhILAs)</name>
    <name type="common">Clostridium oremlandii (strain OhILAs)</name>
    <dbReference type="NCBI Taxonomy" id="350688"/>
    <lineage>
        <taxon>Bacteria</taxon>
        <taxon>Bacillati</taxon>
        <taxon>Bacillota</taxon>
        <taxon>Clostridia</taxon>
        <taxon>Peptostreptococcales</taxon>
        <taxon>Natronincolaceae</taxon>
        <taxon>Alkaliphilus</taxon>
    </lineage>
</organism>
<dbReference type="EMBL" id="CP000853">
    <property type="protein sequence ID" value="ABW18069.1"/>
    <property type="molecule type" value="Genomic_DNA"/>
</dbReference>
<dbReference type="RefSeq" id="WP_012158383.1">
    <property type="nucleotide sequence ID" value="NC_009922.1"/>
</dbReference>
<dbReference type="SMR" id="A8MLF5"/>
<dbReference type="STRING" id="350688.Clos_0507"/>
<dbReference type="KEGG" id="aoe:Clos_0507"/>
<dbReference type="eggNOG" id="COG0097">
    <property type="taxonomic scope" value="Bacteria"/>
</dbReference>
<dbReference type="HOGENOM" id="CLU_065464_1_2_9"/>
<dbReference type="OrthoDB" id="9805007at2"/>
<dbReference type="Proteomes" id="UP000000269">
    <property type="component" value="Chromosome"/>
</dbReference>
<dbReference type="GO" id="GO:0022625">
    <property type="term" value="C:cytosolic large ribosomal subunit"/>
    <property type="evidence" value="ECO:0007669"/>
    <property type="project" value="TreeGrafter"/>
</dbReference>
<dbReference type="GO" id="GO:0019843">
    <property type="term" value="F:rRNA binding"/>
    <property type="evidence" value="ECO:0007669"/>
    <property type="project" value="UniProtKB-UniRule"/>
</dbReference>
<dbReference type="GO" id="GO:0003735">
    <property type="term" value="F:structural constituent of ribosome"/>
    <property type="evidence" value="ECO:0007669"/>
    <property type="project" value="InterPro"/>
</dbReference>
<dbReference type="GO" id="GO:0002181">
    <property type="term" value="P:cytoplasmic translation"/>
    <property type="evidence" value="ECO:0007669"/>
    <property type="project" value="TreeGrafter"/>
</dbReference>
<dbReference type="FunFam" id="3.90.930.12:FF:000001">
    <property type="entry name" value="50S ribosomal protein L6"/>
    <property type="match status" value="1"/>
</dbReference>
<dbReference type="FunFam" id="3.90.930.12:FF:000002">
    <property type="entry name" value="50S ribosomal protein L6"/>
    <property type="match status" value="1"/>
</dbReference>
<dbReference type="Gene3D" id="3.90.930.12">
    <property type="entry name" value="Ribosomal protein L6, alpha-beta domain"/>
    <property type="match status" value="2"/>
</dbReference>
<dbReference type="HAMAP" id="MF_01365_B">
    <property type="entry name" value="Ribosomal_uL6_B"/>
    <property type="match status" value="1"/>
</dbReference>
<dbReference type="InterPro" id="IPR000702">
    <property type="entry name" value="Ribosomal_uL6-like"/>
</dbReference>
<dbReference type="InterPro" id="IPR036789">
    <property type="entry name" value="Ribosomal_uL6-like_a/b-dom_sf"/>
</dbReference>
<dbReference type="InterPro" id="IPR020040">
    <property type="entry name" value="Ribosomal_uL6_a/b-dom"/>
</dbReference>
<dbReference type="InterPro" id="IPR019906">
    <property type="entry name" value="Ribosomal_uL6_bac-type"/>
</dbReference>
<dbReference type="InterPro" id="IPR002358">
    <property type="entry name" value="Ribosomal_uL6_CS"/>
</dbReference>
<dbReference type="NCBIfam" id="TIGR03654">
    <property type="entry name" value="L6_bact"/>
    <property type="match status" value="1"/>
</dbReference>
<dbReference type="PANTHER" id="PTHR11655">
    <property type="entry name" value="60S/50S RIBOSOMAL PROTEIN L6/L9"/>
    <property type="match status" value="1"/>
</dbReference>
<dbReference type="PANTHER" id="PTHR11655:SF14">
    <property type="entry name" value="LARGE RIBOSOMAL SUBUNIT PROTEIN UL6M"/>
    <property type="match status" value="1"/>
</dbReference>
<dbReference type="Pfam" id="PF00347">
    <property type="entry name" value="Ribosomal_L6"/>
    <property type="match status" value="2"/>
</dbReference>
<dbReference type="PIRSF" id="PIRSF002162">
    <property type="entry name" value="Ribosomal_L6"/>
    <property type="match status" value="1"/>
</dbReference>
<dbReference type="PRINTS" id="PR00059">
    <property type="entry name" value="RIBOSOMALL6"/>
</dbReference>
<dbReference type="SUPFAM" id="SSF56053">
    <property type="entry name" value="Ribosomal protein L6"/>
    <property type="match status" value="2"/>
</dbReference>
<dbReference type="PROSITE" id="PS00525">
    <property type="entry name" value="RIBOSOMAL_L6_1"/>
    <property type="match status" value="1"/>
</dbReference>